<evidence type="ECO:0000255" key="1">
    <source>
        <dbReference type="HAMAP-Rule" id="MF_00144"/>
    </source>
</evidence>
<gene>
    <name evidence="1" type="primary">mnmA</name>
    <name type="ordered locus">YpsIP31758_1612</name>
</gene>
<comment type="function">
    <text evidence="1">Catalyzes the 2-thiolation of uridine at the wobble position (U34) of tRNA(Lys), tRNA(Glu) and tRNA(Gln), leading to the formation of s(2)U34, the first step of tRNA-mnm(5)s(2)U34 synthesis. Sulfur is provided by IscS, via a sulfur-relay system. Binds ATP and its substrate tRNAs.</text>
</comment>
<comment type="catalytic activity">
    <reaction evidence="1">
        <text>S-sulfanyl-L-cysteinyl-[protein] + uridine(34) in tRNA + AH2 + ATP = 2-thiouridine(34) in tRNA + L-cysteinyl-[protein] + A + AMP + diphosphate + H(+)</text>
        <dbReference type="Rhea" id="RHEA:47032"/>
        <dbReference type="Rhea" id="RHEA-COMP:10131"/>
        <dbReference type="Rhea" id="RHEA-COMP:11726"/>
        <dbReference type="Rhea" id="RHEA-COMP:11727"/>
        <dbReference type="Rhea" id="RHEA-COMP:11728"/>
        <dbReference type="ChEBI" id="CHEBI:13193"/>
        <dbReference type="ChEBI" id="CHEBI:15378"/>
        <dbReference type="ChEBI" id="CHEBI:17499"/>
        <dbReference type="ChEBI" id="CHEBI:29950"/>
        <dbReference type="ChEBI" id="CHEBI:30616"/>
        <dbReference type="ChEBI" id="CHEBI:33019"/>
        <dbReference type="ChEBI" id="CHEBI:61963"/>
        <dbReference type="ChEBI" id="CHEBI:65315"/>
        <dbReference type="ChEBI" id="CHEBI:87170"/>
        <dbReference type="ChEBI" id="CHEBI:456215"/>
        <dbReference type="EC" id="2.8.1.13"/>
    </reaction>
</comment>
<comment type="subunit">
    <text evidence="1">Interacts with TusE.</text>
</comment>
<comment type="subcellular location">
    <subcellularLocation>
        <location evidence="1">Cytoplasm</location>
    </subcellularLocation>
</comment>
<comment type="similarity">
    <text evidence="1">Belongs to the MnmA/TRMU family.</text>
</comment>
<feature type="chain" id="PRO_0000349868" description="tRNA-specific 2-thiouridylase MnmA">
    <location>
        <begin position="1"/>
        <end position="371"/>
    </location>
</feature>
<feature type="region of interest" description="Interaction with target base in tRNA" evidence="1">
    <location>
        <begin position="98"/>
        <end position="100"/>
    </location>
</feature>
<feature type="region of interest" description="Interaction with tRNA" evidence="1">
    <location>
        <begin position="150"/>
        <end position="152"/>
    </location>
</feature>
<feature type="region of interest" description="Interaction with tRNA" evidence="1">
    <location>
        <begin position="312"/>
        <end position="313"/>
    </location>
</feature>
<feature type="active site" description="Nucleophile" evidence="1">
    <location>
        <position position="103"/>
    </location>
</feature>
<feature type="active site" description="Cysteine persulfide intermediate" evidence="1">
    <location>
        <position position="200"/>
    </location>
</feature>
<feature type="binding site" evidence="1">
    <location>
        <begin position="12"/>
        <end position="19"/>
    </location>
    <ligand>
        <name>ATP</name>
        <dbReference type="ChEBI" id="CHEBI:30616"/>
    </ligand>
</feature>
<feature type="binding site" evidence="1">
    <location>
        <position position="38"/>
    </location>
    <ligand>
        <name>ATP</name>
        <dbReference type="ChEBI" id="CHEBI:30616"/>
    </ligand>
</feature>
<feature type="binding site" evidence="1">
    <location>
        <position position="128"/>
    </location>
    <ligand>
        <name>ATP</name>
        <dbReference type="ChEBI" id="CHEBI:30616"/>
    </ligand>
</feature>
<feature type="site" description="Interaction with tRNA" evidence="1">
    <location>
        <position position="129"/>
    </location>
</feature>
<feature type="site" description="Interaction with tRNA" evidence="1">
    <location>
        <position position="345"/>
    </location>
</feature>
<feature type="disulfide bond" description="Alternate" evidence="1">
    <location>
        <begin position="103"/>
        <end position="200"/>
    </location>
</feature>
<reference key="1">
    <citation type="journal article" date="2007" name="PLoS Genet.">
        <title>The complete genome sequence of Yersinia pseudotuberculosis IP31758, the causative agent of Far East scarlet-like fever.</title>
        <authorList>
            <person name="Eppinger M."/>
            <person name="Rosovitz M.J."/>
            <person name="Fricke W.F."/>
            <person name="Rasko D.A."/>
            <person name="Kokorina G."/>
            <person name="Fayolle C."/>
            <person name="Lindler L.E."/>
            <person name="Carniel E."/>
            <person name="Ravel J."/>
        </authorList>
    </citation>
    <scope>NUCLEOTIDE SEQUENCE [LARGE SCALE GENOMIC DNA]</scope>
    <source>
        <strain>IP 31758</strain>
    </source>
</reference>
<dbReference type="EC" id="2.8.1.13" evidence="1"/>
<dbReference type="EMBL" id="CP000720">
    <property type="protein sequence ID" value="ABS49109.1"/>
    <property type="molecule type" value="Genomic_DNA"/>
</dbReference>
<dbReference type="RefSeq" id="WP_012104985.1">
    <property type="nucleotide sequence ID" value="NC_009708.1"/>
</dbReference>
<dbReference type="SMR" id="A7FH61"/>
<dbReference type="KEGG" id="ypi:YpsIP31758_1612"/>
<dbReference type="HOGENOM" id="CLU_035188_1_0_6"/>
<dbReference type="Proteomes" id="UP000002412">
    <property type="component" value="Chromosome"/>
</dbReference>
<dbReference type="GO" id="GO:0005737">
    <property type="term" value="C:cytoplasm"/>
    <property type="evidence" value="ECO:0007669"/>
    <property type="project" value="UniProtKB-SubCell"/>
</dbReference>
<dbReference type="GO" id="GO:0005524">
    <property type="term" value="F:ATP binding"/>
    <property type="evidence" value="ECO:0007669"/>
    <property type="project" value="UniProtKB-KW"/>
</dbReference>
<dbReference type="GO" id="GO:0000049">
    <property type="term" value="F:tRNA binding"/>
    <property type="evidence" value="ECO:0007669"/>
    <property type="project" value="UniProtKB-KW"/>
</dbReference>
<dbReference type="GO" id="GO:0103016">
    <property type="term" value="F:tRNA-uridine 2-sulfurtransferase activity"/>
    <property type="evidence" value="ECO:0007669"/>
    <property type="project" value="UniProtKB-EC"/>
</dbReference>
<dbReference type="GO" id="GO:0002143">
    <property type="term" value="P:tRNA wobble position uridine thiolation"/>
    <property type="evidence" value="ECO:0007669"/>
    <property type="project" value="TreeGrafter"/>
</dbReference>
<dbReference type="CDD" id="cd01998">
    <property type="entry name" value="MnmA_TRMU-like"/>
    <property type="match status" value="1"/>
</dbReference>
<dbReference type="FunFam" id="2.30.30.280:FF:000001">
    <property type="entry name" value="tRNA-specific 2-thiouridylase MnmA"/>
    <property type="match status" value="1"/>
</dbReference>
<dbReference type="FunFam" id="2.40.30.10:FF:000023">
    <property type="entry name" value="tRNA-specific 2-thiouridylase MnmA"/>
    <property type="match status" value="1"/>
</dbReference>
<dbReference type="FunFam" id="3.40.50.620:FF:000004">
    <property type="entry name" value="tRNA-specific 2-thiouridylase MnmA"/>
    <property type="match status" value="1"/>
</dbReference>
<dbReference type="Gene3D" id="2.30.30.280">
    <property type="entry name" value="Adenine nucleotide alpha hydrolases-like domains"/>
    <property type="match status" value="1"/>
</dbReference>
<dbReference type="Gene3D" id="3.40.50.620">
    <property type="entry name" value="HUPs"/>
    <property type="match status" value="1"/>
</dbReference>
<dbReference type="Gene3D" id="2.40.30.10">
    <property type="entry name" value="Translation factors"/>
    <property type="match status" value="1"/>
</dbReference>
<dbReference type="HAMAP" id="MF_00144">
    <property type="entry name" value="tRNA_thiouridyl_MnmA"/>
    <property type="match status" value="1"/>
</dbReference>
<dbReference type="InterPro" id="IPR004506">
    <property type="entry name" value="MnmA-like"/>
</dbReference>
<dbReference type="InterPro" id="IPR046885">
    <property type="entry name" value="MnmA-like_C"/>
</dbReference>
<dbReference type="InterPro" id="IPR046884">
    <property type="entry name" value="MnmA-like_central"/>
</dbReference>
<dbReference type="InterPro" id="IPR023382">
    <property type="entry name" value="MnmA-like_central_sf"/>
</dbReference>
<dbReference type="InterPro" id="IPR014729">
    <property type="entry name" value="Rossmann-like_a/b/a_fold"/>
</dbReference>
<dbReference type="NCBIfam" id="NF001138">
    <property type="entry name" value="PRK00143.1"/>
    <property type="match status" value="1"/>
</dbReference>
<dbReference type="NCBIfam" id="TIGR00420">
    <property type="entry name" value="trmU"/>
    <property type="match status" value="1"/>
</dbReference>
<dbReference type="PANTHER" id="PTHR11933:SF5">
    <property type="entry name" value="MITOCHONDRIAL TRNA-SPECIFIC 2-THIOURIDYLASE 1"/>
    <property type="match status" value="1"/>
</dbReference>
<dbReference type="PANTHER" id="PTHR11933">
    <property type="entry name" value="TRNA 5-METHYLAMINOMETHYL-2-THIOURIDYLATE -METHYLTRANSFERASE"/>
    <property type="match status" value="1"/>
</dbReference>
<dbReference type="Pfam" id="PF03054">
    <property type="entry name" value="tRNA_Me_trans"/>
    <property type="match status" value="1"/>
</dbReference>
<dbReference type="Pfam" id="PF20258">
    <property type="entry name" value="tRNA_Me_trans_C"/>
    <property type="match status" value="1"/>
</dbReference>
<dbReference type="Pfam" id="PF20259">
    <property type="entry name" value="tRNA_Me_trans_M"/>
    <property type="match status" value="1"/>
</dbReference>
<dbReference type="SUPFAM" id="SSF52402">
    <property type="entry name" value="Adenine nucleotide alpha hydrolases-like"/>
    <property type="match status" value="1"/>
</dbReference>
<name>MNMA_YERP3</name>
<sequence length="371" mass="41365">MSDNSQKKVIVGMSGGVDSSVSAYLLQQQGYQVAGLFMKNWEEDDDEEYCSAATDLADAQAVCDKLGMELHTVNFAAEYWDNVFELFLAEYKAGRTPNPDILCNKEIKFKAFLEFAAEDLGADYIATGHYVRRQDVDGKSRLLRGLDGNKDQSYFLYTLSHEQIAQSLFPVGELEKPEVRRIAEQLDLVTAKKKDSTGICFIGERKFRDFLGRYLPAQPGPIMTVDGQLVGKHQGLMYHTLGQRKGLGIGGTKEGGDDPWYVVDKDLDSNTLLVAQGHEHPRLMSVGLVAQQLHWVDRQPVTAPFRCVVKTRYRQQDIPCTVTPLDDERVDVRFDDPVAAVTPGQSAVFYQGEICLGGGIIEQRYPLTIPA</sequence>
<protein>
    <recommendedName>
        <fullName evidence="1">tRNA-specific 2-thiouridylase MnmA</fullName>
        <ecNumber evidence="1">2.8.1.13</ecNumber>
    </recommendedName>
</protein>
<keyword id="KW-0067">ATP-binding</keyword>
<keyword id="KW-0963">Cytoplasm</keyword>
<keyword id="KW-1015">Disulfide bond</keyword>
<keyword id="KW-0547">Nucleotide-binding</keyword>
<keyword id="KW-0694">RNA-binding</keyword>
<keyword id="KW-0808">Transferase</keyword>
<keyword id="KW-0819">tRNA processing</keyword>
<keyword id="KW-0820">tRNA-binding</keyword>
<accession>A7FH61</accession>
<organism>
    <name type="scientific">Yersinia pseudotuberculosis serotype O:1b (strain IP 31758)</name>
    <dbReference type="NCBI Taxonomy" id="349747"/>
    <lineage>
        <taxon>Bacteria</taxon>
        <taxon>Pseudomonadati</taxon>
        <taxon>Pseudomonadota</taxon>
        <taxon>Gammaproteobacteria</taxon>
        <taxon>Enterobacterales</taxon>
        <taxon>Yersiniaceae</taxon>
        <taxon>Yersinia</taxon>
    </lineage>
</organism>
<proteinExistence type="inferred from homology"/>